<name>SYY_SALEP</name>
<reference key="1">
    <citation type="journal article" date="2008" name="Genome Res.">
        <title>Comparative genome analysis of Salmonella enteritidis PT4 and Salmonella gallinarum 287/91 provides insights into evolutionary and host adaptation pathways.</title>
        <authorList>
            <person name="Thomson N.R."/>
            <person name="Clayton D.J."/>
            <person name="Windhorst D."/>
            <person name="Vernikos G."/>
            <person name="Davidson S."/>
            <person name="Churcher C."/>
            <person name="Quail M.A."/>
            <person name="Stevens M."/>
            <person name="Jones M.A."/>
            <person name="Watson M."/>
            <person name="Barron A."/>
            <person name="Layton A."/>
            <person name="Pickard D."/>
            <person name="Kingsley R.A."/>
            <person name="Bignell A."/>
            <person name="Clark L."/>
            <person name="Harris B."/>
            <person name="Ormond D."/>
            <person name="Abdellah Z."/>
            <person name="Brooks K."/>
            <person name="Cherevach I."/>
            <person name="Chillingworth T."/>
            <person name="Woodward J."/>
            <person name="Norberczak H."/>
            <person name="Lord A."/>
            <person name="Arrowsmith C."/>
            <person name="Jagels K."/>
            <person name="Moule S."/>
            <person name="Mungall K."/>
            <person name="Saunders M."/>
            <person name="Whitehead S."/>
            <person name="Chabalgoity J.A."/>
            <person name="Maskell D."/>
            <person name="Humphreys T."/>
            <person name="Roberts M."/>
            <person name="Barrow P.A."/>
            <person name="Dougan G."/>
            <person name="Parkhill J."/>
        </authorList>
    </citation>
    <scope>NUCLEOTIDE SEQUENCE [LARGE SCALE GENOMIC DNA]</scope>
    <source>
        <strain>P125109</strain>
    </source>
</reference>
<feature type="chain" id="PRO_1000189323" description="Tyrosine--tRNA ligase">
    <location>
        <begin position="1"/>
        <end position="424"/>
    </location>
</feature>
<feature type="domain" description="S4 RNA-binding" evidence="1">
    <location>
        <begin position="357"/>
        <end position="414"/>
    </location>
</feature>
<feature type="short sequence motif" description="'HIGH' region">
    <location>
        <begin position="42"/>
        <end position="51"/>
    </location>
</feature>
<feature type="short sequence motif" description="'KMSKS' region">
    <location>
        <begin position="235"/>
        <end position="239"/>
    </location>
</feature>
<feature type="binding site" evidence="1">
    <location>
        <position position="37"/>
    </location>
    <ligand>
        <name>L-tyrosine</name>
        <dbReference type="ChEBI" id="CHEBI:58315"/>
    </ligand>
</feature>
<feature type="binding site" evidence="1">
    <location>
        <position position="175"/>
    </location>
    <ligand>
        <name>L-tyrosine</name>
        <dbReference type="ChEBI" id="CHEBI:58315"/>
    </ligand>
</feature>
<feature type="binding site" evidence="1">
    <location>
        <position position="179"/>
    </location>
    <ligand>
        <name>L-tyrosine</name>
        <dbReference type="ChEBI" id="CHEBI:58315"/>
    </ligand>
</feature>
<feature type="binding site" evidence="1">
    <location>
        <position position="238"/>
    </location>
    <ligand>
        <name>ATP</name>
        <dbReference type="ChEBI" id="CHEBI:30616"/>
    </ligand>
</feature>
<dbReference type="EC" id="6.1.1.1" evidence="1"/>
<dbReference type="EMBL" id="AM933172">
    <property type="protein sequence ID" value="CAR33180.1"/>
    <property type="molecule type" value="Genomic_DNA"/>
</dbReference>
<dbReference type="RefSeq" id="WP_000168629.1">
    <property type="nucleotide sequence ID" value="NC_011294.1"/>
</dbReference>
<dbReference type="SMR" id="B5QV10"/>
<dbReference type="KEGG" id="set:SEN1598"/>
<dbReference type="HOGENOM" id="CLU_024003_0_3_6"/>
<dbReference type="Proteomes" id="UP000000613">
    <property type="component" value="Chromosome"/>
</dbReference>
<dbReference type="GO" id="GO:0005829">
    <property type="term" value="C:cytosol"/>
    <property type="evidence" value="ECO:0007669"/>
    <property type="project" value="TreeGrafter"/>
</dbReference>
<dbReference type="GO" id="GO:0005524">
    <property type="term" value="F:ATP binding"/>
    <property type="evidence" value="ECO:0007669"/>
    <property type="project" value="UniProtKB-UniRule"/>
</dbReference>
<dbReference type="GO" id="GO:0003723">
    <property type="term" value="F:RNA binding"/>
    <property type="evidence" value="ECO:0007669"/>
    <property type="project" value="UniProtKB-KW"/>
</dbReference>
<dbReference type="GO" id="GO:0004831">
    <property type="term" value="F:tyrosine-tRNA ligase activity"/>
    <property type="evidence" value="ECO:0007669"/>
    <property type="project" value="UniProtKB-UniRule"/>
</dbReference>
<dbReference type="GO" id="GO:0006437">
    <property type="term" value="P:tyrosyl-tRNA aminoacylation"/>
    <property type="evidence" value="ECO:0007669"/>
    <property type="project" value="UniProtKB-UniRule"/>
</dbReference>
<dbReference type="CDD" id="cd00165">
    <property type="entry name" value="S4"/>
    <property type="match status" value="1"/>
</dbReference>
<dbReference type="CDD" id="cd00805">
    <property type="entry name" value="TyrRS_core"/>
    <property type="match status" value="1"/>
</dbReference>
<dbReference type="FunFam" id="1.10.240.10:FF:000001">
    <property type="entry name" value="Tyrosine--tRNA ligase"/>
    <property type="match status" value="1"/>
</dbReference>
<dbReference type="FunFam" id="3.10.290.10:FF:000007">
    <property type="entry name" value="Tyrosine--tRNA ligase"/>
    <property type="match status" value="1"/>
</dbReference>
<dbReference type="FunFam" id="3.40.50.620:FF:000008">
    <property type="entry name" value="Tyrosine--tRNA ligase"/>
    <property type="match status" value="1"/>
</dbReference>
<dbReference type="Gene3D" id="3.40.50.620">
    <property type="entry name" value="HUPs"/>
    <property type="match status" value="1"/>
</dbReference>
<dbReference type="Gene3D" id="3.10.290.10">
    <property type="entry name" value="RNA-binding S4 domain"/>
    <property type="match status" value="1"/>
</dbReference>
<dbReference type="Gene3D" id="1.10.240.10">
    <property type="entry name" value="Tyrosyl-Transfer RNA Synthetase"/>
    <property type="match status" value="1"/>
</dbReference>
<dbReference type="HAMAP" id="MF_02006">
    <property type="entry name" value="Tyr_tRNA_synth_type1"/>
    <property type="match status" value="1"/>
</dbReference>
<dbReference type="InterPro" id="IPR001412">
    <property type="entry name" value="aa-tRNA-synth_I_CS"/>
</dbReference>
<dbReference type="InterPro" id="IPR002305">
    <property type="entry name" value="aa-tRNA-synth_Ic"/>
</dbReference>
<dbReference type="InterPro" id="IPR014729">
    <property type="entry name" value="Rossmann-like_a/b/a_fold"/>
</dbReference>
<dbReference type="InterPro" id="IPR002942">
    <property type="entry name" value="S4_RNA-bd"/>
</dbReference>
<dbReference type="InterPro" id="IPR036986">
    <property type="entry name" value="S4_RNA-bd_sf"/>
</dbReference>
<dbReference type="InterPro" id="IPR054608">
    <property type="entry name" value="SYY-like_C"/>
</dbReference>
<dbReference type="InterPro" id="IPR002307">
    <property type="entry name" value="Tyr-tRNA-ligase"/>
</dbReference>
<dbReference type="InterPro" id="IPR024088">
    <property type="entry name" value="Tyr-tRNA-ligase_bac-type"/>
</dbReference>
<dbReference type="InterPro" id="IPR024107">
    <property type="entry name" value="Tyr-tRNA-ligase_bac_1"/>
</dbReference>
<dbReference type="NCBIfam" id="TIGR00234">
    <property type="entry name" value="tyrS"/>
    <property type="match status" value="1"/>
</dbReference>
<dbReference type="PANTHER" id="PTHR11766:SF0">
    <property type="entry name" value="TYROSINE--TRNA LIGASE, MITOCHONDRIAL"/>
    <property type="match status" value="1"/>
</dbReference>
<dbReference type="PANTHER" id="PTHR11766">
    <property type="entry name" value="TYROSYL-TRNA SYNTHETASE"/>
    <property type="match status" value="1"/>
</dbReference>
<dbReference type="Pfam" id="PF22421">
    <property type="entry name" value="SYY_C-terminal"/>
    <property type="match status" value="1"/>
</dbReference>
<dbReference type="Pfam" id="PF00579">
    <property type="entry name" value="tRNA-synt_1b"/>
    <property type="match status" value="1"/>
</dbReference>
<dbReference type="PRINTS" id="PR01040">
    <property type="entry name" value="TRNASYNTHTYR"/>
</dbReference>
<dbReference type="SMART" id="SM00363">
    <property type="entry name" value="S4"/>
    <property type="match status" value="1"/>
</dbReference>
<dbReference type="SUPFAM" id="SSF55174">
    <property type="entry name" value="Alpha-L RNA-binding motif"/>
    <property type="match status" value="1"/>
</dbReference>
<dbReference type="SUPFAM" id="SSF52374">
    <property type="entry name" value="Nucleotidylyl transferase"/>
    <property type="match status" value="1"/>
</dbReference>
<dbReference type="PROSITE" id="PS00178">
    <property type="entry name" value="AA_TRNA_LIGASE_I"/>
    <property type="match status" value="1"/>
</dbReference>
<dbReference type="PROSITE" id="PS50889">
    <property type="entry name" value="S4"/>
    <property type="match status" value="1"/>
</dbReference>
<evidence type="ECO:0000255" key="1">
    <source>
        <dbReference type="HAMAP-Rule" id="MF_02006"/>
    </source>
</evidence>
<keyword id="KW-0030">Aminoacyl-tRNA synthetase</keyword>
<keyword id="KW-0067">ATP-binding</keyword>
<keyword id="KW-0963">Cytoplasm</keyword>
<keyword id="KW-0436">Ligase</keyword>
<keyword id="KW-0547">Nucleotide-binding</keyword>
<keyword id="KW-0648">Protein biosynthesis</keyword>
<keyword id="KW-0694">RNA-binding</keyword>
<sequence>MASSNLIKQLQERGLVAQVTDEDALAERLAQGPVALYCGFDPTADSLHLGHLVPLLCLKRFQQAGHKPVALVGGATGLIGDPSFKAAERKLNTEETVQEWVAKIRKQVAPFLDFDCGENSAIAANNYDWFGSMNVLTFLRDIGKHFSVNQMINKEAVKQRLNRDDQGISFTEFSYNLLQGYDFACLNKLHGVALQIGGSDQWGNITSGIDLTRRLHQNQVFGLTVPLITKADGTKFGKTEGGAVWLDPKKTSPYKFYQFWINTADADVYRFLKFFTFMDIEEINALEEEDKNSGKAPRAQYVLAEQVTRLVHGEEGLVAAKRITECLFSGSLSALSEADFEQLAQDGVPMVEMEKGADLMQALVDAELQPSRGQARKTIASNAVTINGEKQSDPEYIFNDEDRLFGRYTLLRRGKKNYCLICWK</sequence>
<comment type="function">
    <text evidence="1">Catalyzes the attachment of tyrosine to tRNA(Tyr) in a two-step reaction: tyrosine is first activated by ATP to form Tyr-AMP and then transferred to the acceptor end of tRNA(Tyr).</text>
</comment>
<comment type="catalytic activity">
    <reaction evidence="1">
        <text>tRNA(Tyr) + L-tyrosine + ATP = L-tyrosyl-tRNA(Tyr) + AMP + diphosphate + H(+)</text>
        <dbReference type="Rhea" id="RHEA:10220"/>
        <dbReference type="Rhea" id="RHEA-COMP:9706"/>
        <dbReference type="Rhea" id="RHEA-COMP:9707"/>
        <dbReference type="ChEBI" id="CHEBI:15378"/>
        <dbReference type="ChEBI" id="CHEBI:30616"/>
        <dbReference type="ChEBI" id="CHEBI:33019"/>
        <dbReference type="ChEBI" id="CHEBI:58315"/>
        <dbReference type="ChEBI" id="CHEBI:78442"/>
        <dbReference type="ChEBI" id="CHEBI:78536"/>
        <dbReference type="ChEBI" id="CHEBI:456215"/>
        <dbReference type="EC" id="6.1.1.1"/>
    </reaction>
</comment>
<comment type="subunit">
    <text evidence="1">Homodimer.</text>
</comment>
<comment type="subcellular location">
    <subcellularLocation>
        <location evidence="1">Cytoplasm</location>
    </subcellularLocation>
</comment>
<comment type="similarity">
    <text evidence="1">Belongs to the class-I aminoacyl-tRNA synthetase family. TyrS type 1 subfamily.</text>
</comment>
<proteinExistence type="inferred from homology"/>
<accession>B5QV10</accession>
<gene>
    <name evidence="1" type="primary">tyrS</name>
    <name type="ordered locus">SEN1598</name>
</gene>
<organism>
    <name type="scientific">Salmonella enteritidis PT4 (strain P125109)</name>
    <dbReference type="NCBI Taxonomy" id="550537"/>
    <lineage>
        <taxon>Bacteria</taxon>
        <taxon>Pseudomonadati</taxon>
        <taxon>Pseudomonadota</taxon>
        <taxon>Gammaproteobacteria</taxon>
        <taxon>Enterobacterales</taxon>
        <taxon>Enterobacteriaceae</taxon>
        <taxon>Salmonella</taxon>
    </lineage>
</organism>
<protein>
    <recommendedName>
        <fullName evidence="1">Tyrosine--tRNA ligase</fullName>
        <ecNumber evidence="1">6.1.1.1</ecNumber>
    </recommendedName>
    <alternativeName>
        <fullName evidence="1">Tyrosyl-tRNA synthetase</fullName>
        <shortName evidence="1">TyrRS</shortName>
    </alternativeName>
</protein>